<dbReference type="EMBL" id="L42023">
    <property type="protein sequence ID" value="AAC22158.1"/>
    <property type="status" value="ALT_INIT"/>
    <property type="molecule type" value="Genomic_DNA"/>
</dbReference>
<dbReference type="PIR" id="F64153">
    <property type="entry name" value="F64153"/>
</dbReference>
<dbReference type="RefSeq" id="NP_438658.2">
    <property type="nucleotide sequence ID" value="NC_000907.1"/>
</dbReference>
<dbReference type="SMR" id="P44733"/>
<dbReference type="STRING" id="71421.HI_0500"/>
<dbReference type="EnsemblBacteria" id="AAC22158">
    <property type="protein sequence ID" value="AAC22158"/>
    <property type="gene ID" value="HI_0500"/>
</dbReference>
<dbReference type="KEGG" id="hin:HI_0500"/>
<dbReference type="PATRIC" id="fig|71421.8.peg.519"/>
<dbReference type="eggNOG" id="COG1322">
    <property type="taxonomic scope" value="Bacteria"/>
</dbReference>
<dbReference type="HOGENOM" id="CLU_024057_0_1_6"/>
<dbReference type="OrthoDB" id="9765111at2"/>
<dbReference type="PhylomeDB" id="P44733"/>
<dbReference type="Proteomes" id="UP000000579">
    <property type="component" value="Chromosome"/>
</dbReference>
<dbReference type="GO" id="GO:0006310">
    <property type="term" value="P:DNA recombination"/>
    <property type="evidence" value="ECO:0000318"/>
    <property type="project" value="GO_Central"/>
</dbReference>
<dbReference type="Gene3D" id="1.20.5.340">
    <property type="match status" value="1"/>
</dbReference>
<dbReference type="InterPro" id="IPR003798">
    <property type="entry name" value="DNA_recombination_RmuC"/>
</dbReference>
<dbReference type="PANTHER" id="PTHR30563">
    <property type="entry name" value="DNA RECOMBINATION PROTEIN RMUC"/>
    <property type="match status" value="1"/>
</dbReference>
<dbReference type="PANTHER" id="PTHR30563:SF0">
    <property type="entry name" value="DNA RECOMBINATION PROTEIN RMUC"/>
    <property type="match status" value="1"/>
</dbReference>
<dbReference type="Pfam" id="PF02646">
    <property type="entry name" value="RmuC"/>
    <property type="match status" value="1"/>
</dbReference>
<feature type="chain" id="PRO_0000202044" description="DNA recombination protein RmuC homolog">
    <location>
        <begin position="1"/>
        <end position="450"/>
    </location>
</feature>
<feature type="coiled-coil region" evidence="2">
    <location>
        <begin position="3"/>
        <end position="89"/>
    </location>
</feature>
<proteinExistence type="inferred from homology"/>
<sequence>MHQELSKTTQDYNQLASKFDELSSIKNQFEQQTIKVQTENQGLQYRLTERDEQIHHLTQERQNLTEKLTALSQELTGLQTTLTEKEKYFSAQQQNFEQSKQQLGVEFQNLANRILDEKSRSFSQSNQTALETLLKPFREQIEGFQKRVNEIHSESVKGNAGLEAEIKKVLEIGLNMSQEASNLTSALKGEKKTLGNWGEVQLERALQLAGLEENVHYRAQAHFKDEQGGRNYPDFVLNLPDEKHLIIDSKMSLVAYESAVNSEDDFERERLLKEHISALKTHINDLHKKDYSNLIGMCSPNFVLMFIAVEPAYIEALKADPALFNYGYERNVIMVSHTTLMPILRTVANLWRIERGNAEAKEIAEKAGEIYNQICLVAERLNKLGNTLSTVSNQYNSTVTALVGQQGLVGKVERFKTLSAKANKTMPDVDLLNNQLDLARLNVLNQENLQ</sequence>
<keyword id="KW-0175">Coiled coil</keyword>
<keyword id="KW-0233">DNA recombination</keyword>
<keyword id="KW-1185">Reference proteome</keyword>
<accession>P44733</accession>
<organism>
    <name type="scientific">Haemophilus influenzae (strain ATCC 51907 / DSM 11121 / KW20 / Rd)</name>
    <dbReference type="NCBI Taxonomy" id="71421"/>
    <lineage>
        <taxon>Bacteria</taxon>
        <taxon>Pseudomonadati</taxon>
        <taxon>Pseudomonadota</taxon>
        <taxon>Gammaproteobacteria</taxon>
        <taxon>Pasteurellales</taxon>
        <taxon>Pasteurellaceae</taxon>
        <taxon>Haemophilus</taxon>
    </lineage>
</organism>
<evidence type="ECO:0000250" key="1"/>
<evidence type="ECO:0000255" key="2"/>
<evidence type="ECO:0000305" key="3"/>
<comment type="function">
    <text evidence="1">Involved in DNA recombination.</text>
</comment>
<comment type="similarity">
    <text evidence="3">Belongs to the RmuC family.</text>
</comment>
<comment type="sequence caution" evidence="3">
    <conflict type="erroneous initiation">
        <sequence resource="EMBL-CDS" id="AAC22158"/>
    </conflict>
</comment>
<name>RMUC_HAEIN</name>
<protein>
    <recommendedName>
        <fullName>DNA recombination protein RmuC homolog</fullName>
    </recommendedName>
</protein>
<reference key="1">
    <citation type="journal article" date="1995" name="Science">
        <title>Whole-genome random sequencing and assembly of Haemophilus influenzae Rd.</title>
        <authorList>
            <person name="Fleischmann R.D."/>
            <person name="Adams M.D."/>
            <person name="White O."/>
            <person name="Clayton R.A."/>
            <person name="Kirkness E.F."/>
            <person name="Kerlavage A.R."/>
            <person name="Bult C.J."/>
            <person name="Tomb J.-F."/>
            <person name="Dougherty B.A."/>
            <person name="Merrick J.M."/>
            <person name="McKenney K."/>
            <person name="Sutton G.G."/>
            <person name="FitzHugh W."/>
            <person name="Fields C.A."/>
            <person name="Gocayne J.D."/>
            <person name="Scott J.D."/>
            <person name="Shirley R."/>
            <person name="Liu L.-I."/>
            <person name="Glodek A."/>
            <person name="Kelley J.M."/>
            <person name="Weidman J.F."/>
            <person name="Phillips C.A."/>
            <person name="Spriggs T."/>
            <person name="Hedblom E."/>
            <person name="Cotton M.D."/>
            <person name="Utterback T.R."/>
            <person name="Hanna M.C."/>
            <person name="Nguyen D.T."/>
            <person name="Saudek D.M."/>
            <person name="Brandon R.C."/>
            <person name="Fine L.D."/>
            <person name="Fritchman J.L."/>
            <person name="Fuhrmann J.L."/>
            <person name="Geoghagen N.S.M."/>
            <person name="Gnehm C.L."/>
            <person name="McDonald L.A."/>
            <person name="Small K.V."/>
            <person name="Fraser C.M."/>
            <person name="Smith H.O."/>
            <person name="Venter J.C."/>
        </authorList>
    </citation>
    <scope>NUCLEOTIDE SEQUENCE [LARGE SCALE GENOMIC DNA]</scope>
    <source>
        <strain>ATCC 51907 / DSM 11121 / KW20 / Rd</strain>
    </source>
</reference>
<gene>
    <name type="primary">rmuC</name>
    <name type="ordered locus">HI_0500</name>
</gene>